<proteinExistence type="inferred from homology"/>
<feature type="chain" id="PRO_0000329583" description="Polyribonucleotide nucleotidyltransferase">
    <location>
        <begin position="1"/>
        <end position="694"/>
    </location>
</feature>
<feature type="domain" description="KH" evidence="1">
    <location>
        <begin position="552"/>
        <end position="611"/>
    </location>
</feature>
<feature type="domain" description="S1 motif" evidence="1">
    <location>
        <begin position="621"/>
        <end position="689"/>
    </location>
</feature>
<feature type="binding site" evidence="1">
    <location>
        <position position="485"/>
    </location>
    <ligand>
        <name>Mg(2+)</name>
        <dbReference type="ChEBI" id="CHEBI:18420"/>
    </ligand>
</feature>
<feature type="binding site" evidence="1">
    <location>
        <position position="491"/>
    </location>
    <ligand>
        <name>Mg(2+)</name>
        <dbReference type="ChEBI" id="CHEBI:18420"/>
    </ligand>
</feature>
<sequence>MTFETIFVTLEEGKTLVFETGKIARQANGAVLARMQETWVFSSVCAANLEEPVDFLPLRVDYQEKFSSIGKTLGGFIKREGRPTEREILTSRLIDRSMRPSLPNRLMQDVQVLSYVWSYDGVTLPDPIAICGVSAALAISDIPQISVVAGVRVGFVNNSWVVNPTKAEMDVSRMELVLAGTENAILMIEGHCDFLTEEQVIEAIEFGHKHIATICRAIKDLQQKVGKKKNSDAIVPLPEEVQSSVNTFVEGKFADLLKIKEKKAFEAASKQLEKEIVEKFLEENEIFTALNIKTAFKQAKSDYMRALIREQSVRSDGRAITTIRPISIDTSFLPRTHGSCLFTRGETQTVAVCTLGSEAMAQRYEDLNGEGLAKFYLQYFFPPFSVGEVGRIGSPGRREIGHGKLAEKALSHTLPDPAKFPYTIRIESNITESNGSSSMASVCGGCLALMDAGVPIKTPIAGIAMGLILDNDHVTILSDISGLEDYLGDMDFKVAGNTEGITAFQMDIKVEGITPTIMQAALAQAKAGRQHILDIMKEALAAPKTDLSQYAPRIETMQIKPNKIATVIGPGGKQIRQIIEEAGVQIDINDSGLVSISASSPQAIEKAKSMIEGLVGEVEVGKIYEGRVTSIVPFGAFVEILPGKEGLCHISEFSKQRIENVGDFVKQGDILAVKLLSINEKGQYKLSHKATLSE</sequence>
<comment type="function">
    <text evidence="1">Involved in mRNA degradation. Catalyzes the phosphorolysis of single-stranded polyribonucleotides processively in the 3'- to 5'-direction.</text>
</comment>
<comment type="catalytic activity">
    <reaction evidence="1">
        <text>RNA(n+1) + phosphate = RNA(n) + a ribonucleoside 5'-diphosphate</text>
        <dbReference type="Rhea" id="RHEA:22096"/>
        <dbReference type="Rhea" id="RHEA-COMP:14527"/>
        <dbReference type="Rhea" id="RHEA-COMP:17342"/>
        <dbReference type="ChEBI" id="CHEBI:43474"/>
        <dbReference type="ChEBI" id="CHEBI:57930"/>
        <dbReference type="ChEBI" id="CHEBI:140395"/>
        <dbReference type="EC" id="2.7.7.8"/>
    </reaction>
</comment>
<comment type="cofactor">
    <cofactor evidence="1">
        <name>Mg(2+)</name>
        <dbReference type="ChEBI" id="CHEBI:18420"/>
    </cofactor>
</comment>
<comment type="subcellular location">
    <subcellularLocation>
        <location evidence="1">Cytoplasm</location>
    </subcellularLocation>
</comment>
<comment type="similarity">
    <text evidence="1">Belongs to the polyribonucleotide nucleotidyltransferase family.</text>
</comment>
<accession>Q822C1</accession>
<evidence type="ECO:0000255" key="1">
    <source>
        <dbReference type="HAMAP-Rule" id="MF_01595"/>
    </source>
</evidence>
<protein>
    <recommendedName>
        <fullName evidence="1">Polyribonucleotide nucleotidyltransferase</fullName>
        <ecNumber evidence="1">2.7.7.8</ecNumber>
    </recommendedName>
    <alternativeName>
        <fullName evidence="1">Polynucleotide phosphorylase</fullName>
        <shortName evidence="1">PNPase</shortName>
    </alternativeName>
</protein>
<reference key="1">
    <citation type="journal article" date="2003" name="Nucleic Acids Res.">
        <title>Genome sequence of Chlamydophila caviae (Chlamydia psittaci GPIC): examining the role of niche-specific genes in the evolution of the Chlamydiaceae.</title>
        <authorList>
            <person name="Read T.D."/>
            <person name="Myers G.S.A."/>
            <person name="Brunham R.C."/>
            <person name="Nelson W.C."/>
            <person name="Paulsen I.T."/>
            <person name="Heidelberg J.F."/>
            <person name="Holtzapple E.K."/>
            <person name="Khouri H.M."/>
            <person name="Federova N.B."/>
            <person name="Carty H.A."/>
            <person name="Umayam L.A."/>
            <person name="Haft D.H."/>
            <person name="Peterson J.D."/>
            <person name="Beanan M.J."/>
            <person name="White O."/>
            <person name="Salzberg S.L."/>
            <person name="Hsia R.-C."/>
            <person name="McClarty G."/>
            <person name="Rank R.G."/>
            <person name="Bavoil P.M."/>
            <person name="Fraser C.M."/>
        </authorList>
    </citation>
    <scope>NUCLEOTIDE SEQUENCE [LARGE SCALE GENOMIC DNA]</scope>
    <source>
        <strain>ATCC VR-813 / DSM 19441 / 03DC25 / GPIC</strain>
    </source>
</reference>
<dbReference type="EC" id="2.7.7.8" evidence="1"/>
<dbReference type="EMBL" id="AE015925">
    <property type="protein sequence ID" value="AAP05503.1"/>
    <property type="molecule type" value="Genomic_DNA"/>
</dbReference>
<dbReference type="RefSeq" id="WP_011006717.1">
    <property type="nucleotide sequence ID" value="NC_003361.3"/>
</dbReference>
<dbReference type="SMR" id="Q822C1"/>
<dbReference type="STRING" id="227941.CCA_00762"/>
<dbReference type="KEGG" id="cca:CCA_00762"/>
<dbReference type="eggNOG" id="COG1185">
    <property type="taxonomic scope" value="Bacteria"/>
</dbReference>
<dbReference type="HOGENOM" id="CLU_004217_2_2_0"/>
<dbReference type="OrthoDB" id="9804305at2"/>
<dbReference type="Proteomes" id="UP000002193">
    <property type="component" value="Chromosome"/>
</dbReference>
<dbReference type="GO" id="GO:0005829">
    <property type="term" value="C:cytosol"/>
    <property type="evidence" value="ECO:0007669"/>
    <property type="project" value="TreeGrafter"/>
</dbReference>
<dbReference type="GO" id="GO:0000175">
    <property type="term" value="F:3'-5'-RNA exonuclease activity"/>
    <property type="evidence" value="ECO:0007669"/>
    <property type="project" value="TreeGrafter"/>
</dbReference>
<dbReference type="GO" id="GO:0000287">
    <property type="term" value="F:magnesium ion binding"/>
    <property type="evidence" value="ECO:0007669"/>
    <property type="project" value="UniProtKB-UniRule"/>
</dbReference>
<dbReference type="GO" id="GO:0004654">
    <property type="term" value="F:polyribonucleotide nucleotidyltransferase activity"/>
    <property type="evidence" value="ECO:0007669"/>
    <property type="project" value="UniProtKB-UniRule"/>
</dbReference>
<dbReference type="GO" id="GO:0003723">
    <property type="term" value="F:RNA binding"/>
    <property type="evidence" value="ECO:0007669"/>
    <property type="project" value="UniProtKB-UniRule"/>
</dbReference>
<dbReference type="GO" id="GO:0006402">
    <property type="term" value="P:mRNA catabolic process"/>
    <property type="evidence" value="ECO:0007669"/>
    <property type="project" value="UniProtKB-UniRule"/>
</dbReference>
<dbReference type="GO" id="GO:0006396">
    <property type="term" value="P:RNA processing"/>
    <property type="evidence" value="ECO:0007669"/>
    <property type="project" value="InterPro"/>
</dbReference>
<dbReference type="CDD" id="cd02393">
    <property type="entry name" value="KH-I_PNPase"/>
    <property type="match status" value="1"/>
</dbReference>
<dbReference type="CDD" id="cd11364">
    <property type="entry name" value="RNase_PH_PNPase_2"/>
    <property type="match status" value="1"/>
</dbReference>
<dbReference type="CDD" id="cd04472">
    <property type="entry name" value="S1_PNPase"/>
    <property type="match status" value="1"/>
</dbReference>
<dbReference type="FunFam" id="3.30.1370.10:FF:000001">
    <property type="entry name" value="Polyribonucleotide nucleotidyltransferase"/>
    <property type="match status" value="1"/>
</dbReference>
<dbReference type="FunFam" id="3.30.230.70:FF:000001">
    <property type="entry name" value="Polyribonucleotide nucleotidyltransferase"/>
    <property type="match status" value="1"/>
</dbReference>
<dbReference type="FunFam" id="3.30.230.70:FF:000002">
    <property type="entry name" value="Polyribonucleotide nucleotidyltransferase"/>
    <property type="match status" value="1"/>
</dbReference>
<dbReference type="FunFam" id="2.40.50.140:FF:000189">
    <property type="entry name" value="Polyribonucleotide nucleotidyltransferase, putative"/>
    <property type="match status" value="1"/>
</dbReference>
<dbReference type="Gene3D" id="3.30.230.70">
    <property type="entry name" value="GHMP Kinase, N-terminal domain"/>
    <property type="match status" value="2"/>
</dbReference>
<dbReference type="Gene3D" id="3.30.1370.10">
    <property type="entry name" value="K Homology domain, type 1"/>
    <property type="match status" value="1"/>
</dbReference>
<dbReference type="Gene3D" id="2.40.50.140">
    <property type="entry name" value="Nucleic acid-binding proteins"/>
    <property type="match status" value="1"/>
</dbReference>
<dbReference type="HAMAP" id="MF_01595">
    <property type="entry name" value="PNPase"/>
    <property type="match status" value="1"/>
</dbReference>
<dbReference type="InterPro" id="IPR001247">
    <property type="entry name" value="ExoRNase_PH_dom1"/>
</dbReference>
<dbReference type="InterPro" id="IPR015847">
    <property type="entry name" value="ExoRNase_PH_dom2"/>
</dbReference>
<dbReference type="InterPro" id="IPR036345">
    <property type="entry name" value="ExoRNase_PH_dom2_sf"/>
</dbReference>
<dbReference type="InterPro" id="IPR004087">
    <property type="entry name" value="KH_dom"/>
</dbReference>
<dbReference type="InterPro" id="IPR004088">
    <property type="entry name" value="KH_dom_type_1"/>
</dbReference>
<dbReference type="InterPro" id="IPR036612">
    <property type="entry name" value="KH_dom_type_1_sf"/>
</dbReference>
<dbReference type="InterPro" id="IPR012340">
    <property type="entry name" value="NA-bd_OB-fold"/>
</dbReference>
<dbReference type="InterPro" id="IPR012162">
    <property type="entry name" value="PNPase"/>
</dbReference>
<dbReference type="InterPro" id="IPR027408">
    <property type="entry name" value="PNPase/RNase_PH_dom_sf"/>
</dbReference>
<dbReference type="InterPro" id="IPR015848">
    <property type="entry name" value="PNPase_PH_RNA-bd_bac/org-type"/>
</dbReference>
<dbReference type="InterPro" id="IPR036456">
    <property type="entry name" value="PNPase_PH_RNA-bd_sf"/>
</dbReference>
<dbReference type="InterPro" id="IPR020568">
    <property type="entry name" value="Ribosomal_Su5_D2-typ_SF"/>
</dbReference>
<dbReference type="InterPro" id="IPR003029">
    <property type="entry name" value="S1_domain"/>
</dbReference>
<dbReference type="NCBIfam" id="TIGR03591">
    <property type="entry name" value="polynuc_phos"/>
    <property type="match status" value="1"/>
</dbReference>
<dbReference type="NCBIfam" id="NF008805">
    <property type="entry name" value="PRK11824.1"/>
    <property type="match status" value="1"/>
</dbReference>
<dbReference type="PANTHER" id="PTHR11252">
    <property type="entry name" value="POLYRIBONUCLEOTIDE NUCLEOTIDYLTRANSFERASE"/>
    <property type="match status" value="1"/>
</dbReference>
<dbReference type="PANTHER" id="PTHR11252:SF0">
    <property type="entry name" value="POLYRIBONUCLEOTIDE NUCLEOTIDYLTRANSFERASE 1, MITOCHONDRIAL"/>
    <property type="match status" value="1"/>
</dbReference>
<dbReference type="Pfam" id="PF00013">
    <property type="entry name" value="KH_1"/>
    <property type="match status" value="1"/>
</dbReference>
<dbReference type="Pfam" id="PF03726">
    <property type="entry name" value="PNPase"/>
    <property type="match status" value="1"/>
</dbReference>
<dbReference type="Pfam" id="PF01138">
    <property type="entry name" value="RNase_PH"/>
    <property type="match status" value="2"/>
</dbReference>
<dbReference type="Pfam" id="PF03725">
    <property type="entry name" value="RNase_PH_C"/>
    <property type="match status" value="2"/>
</dbReference>
<dbReference type="Pfam" id="PF00575">
    <property type="entry name" value="S1"/>
    <property type="match status" value="1"/>
</dbReference>
<dbReference type="PIRSF" id="PIRSF005499">
    <property type="entry name" value="PNPase"/>
    <property type="match status" value="1"/>
</dbReference>
<dbReference type="SMART" id="SM00322">
    <property type="entry name" value="KH"/>
    <property type="match status" value="1"/>
</dbReference>
<dbReference type="SMART" id="SM00316">
    <property type="entry name" value="S1"/>
    <property type="match status" value="1"/>
</dbReference>
<dbReference type="SUPFAM" id="SSF54791">
    <property type="entry name" value="Eukaryotic type KH-domain (KH-domain type I)"/>
    <property type="match status" value="1"/>
</dbReference>
<dbReference type="SUPFAM" id="SSF50249">
    <property type="entry name" value="Nucleic acid-binding proteins"/>
    <property type="match status" value="1"/>
</dbReference>
<dbReference type="SUPFAM" id="SSF46915">
    <property type="entry name" value="Polynucleotide phosphorylase/guanosine pentaphosphate synthase (PNPase/GPSI), domain 3"/>
    <property type="match status" value="1"/>
</dbReference>
<dbReference type="SUPFAM" id="SSF55666">
    <property type="entry name" value="Ribonuclease PH domain 2-like"/>
    <property type="match status" value="2"/>
</dbReference>
<dbReference type="SUPFAM" id="SSF54211">
    <property type="entry name" value="Ribosomal protein S5 domain 2-like"/>
    <property type="match status" value="2"/>
</dbReference>
<dbReference type="PROSITE" id="PS50084">
    <property type="entry name" value="KH_TYPE_1"/>
    <property type="match status" value="1"/>
</dbReference>
<dbReference type="PROSITE" id="PS50126">
    <property type="entry name" value="S1"/>
    <property type="match status" value="1"/>
</dbReference>
<gene>
    <name evidence="1" type="primary">pnp</name>
    <name type="ordered locus">CCA_00762</name>
</gene>
<keyword id="KW-0963">Cytoplasm</keyword>
<keyword id="KW-0460">Magnesium</keyword>
<keyword id="KW-0479">Metal-binding</keyword>
<keyword id="KW-0548">Nucleotidyltransferase</keyword>
<keyword id="KW-0694">RNA-binding</keyword>
<keyword id="KW-0808">Transferase</keyword>
<name>PNP_CHLCV</name>
<organism>
    <name type="scientific">Chlamydia caviae (strain ATCC VR-813 / DSM 19441 / 03DC25 / GPIC)</name>
    <name type="common">Chlamydophila caviae</name>
    <dbReference type="NCBI Taxonomy" id="227941"/>
    <lineage>
        <taxon>Bacteria</taxon>
        <taxon>Pseudomonadati</taxon>
        <taxon>Chlamydiota</taxon>
        <taxon>Chlamydiia</taxon>
        <taxon>Chlamydiales</taxon>
        <taxon>Chlamydiaceae</taxon>
        <taxon>Chlamydia/Chlamydophila group</taxon>
        <taxon>Chlamydia</taxon>
    </lineage>
</organism>